<proteinExistence type="inferred from homology"/>
<evidence type="ECO:0000255" key="1">
    <source>
        <dbReference type="HAMAP-Rule" id="MF_00176"/>
    </source>
</evidence>
<comment type="function">
    <text evidence="1">Catalyzes the attachment of serine to tRNA(Ser). Is also able to aminoacylate tRNA(Sec) with serine, to form the misacylated tRNA L-seryl-tRNA(Sec), which will be further converted into selenocysteinyl-tRNA(Sec).</text>
</comment>
<comment type="catalytic activity">
    <reaction evidence="1">
        <text>tRNA(Ser) + L-serine + ATP = L-seryl-tRNA(Ser) + AMP + diphosphate + H(+)</text>
        <dbReference type="Rhea" id="RHEA:12292"/>
        <dbReference type="Rhea" id="RHEA-COMP:9669"/>
        <dbReference type="Rhea" id="RHEA-COMP:9703"/>
        <dbReference type="ChEBI" id="CHEBI:15378"/>
        <dbReference type="ChEBI" id="CHEBI:30616"/>
        <dbReference type="ChEBI" id="CHEBI:33019"/>
        <dbReference type="ChEBI" id="CHEBI:33384"/>
        <dbReference type="ChEBI" id="CHEBI:78442"/>
        <dbReference type="ChEBI" id="CHEBI:78533"/>
        <dbReference type="ChEBI" id="CHEBI:456215"/>
        <dbReference type="EC" id="6.1.1.11"/>
    </reaction>
</comment>
<comment type="catalytic activity">
    <reaction evidence="1">
        <text>tRNA(Sec) + L-serine + ATP = L-seryl-tRNA(Sec) + AMP + diphosphate + H(+)</text>
        <dbReference type="Rhea" id="RHEA:42580"/>
        <dbReference type="Rhea" id="RHEA-COMP:9742"/>
        <dbReference type="Rhea" id="RHEA-COMP:10128"/>
        <dbReference type="ChEBI" id="CHEBI:15378"/>
        <dbReference type="ChEBI" id="CHEBI:30616"/>
        <dbReference type="ChEBI" id="CHEBI:33019"/>
        <dbReference type="ChEBI" id="CHEBI:33384"/>
        <dbReference type="ChEBI" id="CHEBI:78442"/>
        <dbReference type="ChEBI" id="CHEBI:78533"/>
        <dbReference type="ChEBI" id="CHEBI:456215"/>
        <dbReference type="EC" id="6.1.1.11"/>
    </reaction>
</comment>
<comment type="pathway">
    <text evidence="1">Aminoacyl-tRNA biosynthesis; selenocysteinyl-tRNA(Sec) biosynthesis; L-seryl-tRNA(Sec) from L-serine and tRNA(Sec): step 1/1.</text>
</comment>
<comment type="subunit">
    <text evidence="1">Homodimer. The tRNA molecule binds across the dimer.</text>
</comment>
<comment type="subcellular location">
    <subcellularLocation>
        <location evidence="1">Cytoplasm</location>
    </subcellularLocation>
</comment>
<comment type="domain">
    <text evidence="1">Consists of two distinct domains, a catalytic core and a N-terminal extension that is involved in tRNA binding.</text>
</comment>
<comment type="similarity">
    <text evidence="1">Belongs to the class-II aminoacyl-tRNA synthetase family. Type-1 seryl-tRNA synthetase subfamily.</text>
</comment>
<feature type="chain" id="PRO_1000098058" description="Serine--tRNA ligase">
    <location>
        <begin position="1"/>
        <end position="434"/>
    </location>
</feature>
<feature type="binding site" evidence="1">
    <location>
        <begin position="239"/>
        <end position="241"/>
    </location>
    <ligand>
        <name>L-serine</name>
        <dbReference type="ChEBI" id="CHEBI:33384"/>
    </ligand>
</feature>
<feature type="binding site" evidence="1">
    <location>
        <begin position="270"/>
        <end position="272"/>
    </location>
    <ligand>
        <name>ATP</name>
        <dbReference type="ChEBI" id="CHEBI:30616"/>
    </ligand>
</feature>
<feature type="binding site" evidence="1">
    <location>
        <position position="293"/>
    </location>
    <ligand>
        <name>L-serine</name>
        <dbReference type="ChEBI" id="CHEBI:33384"/>
    </ligand>
</feature>
<feature type="binding site" evidence="1">
    <location>
        <begin position="357"/>
        <end position="360"/>
    </location>
    <ligand>
        <name>ATP</name>
        <dbReference type="ChEBI" id="CHEBI:30616"/>
    </ligand>
</feature>
<feature type="binding site" evidence="1">
    <location>
        <position position="392"/>
    </location>
    <ligand>
        <name>L-serine</name>
        <dbReference type="ChEBI" id="CHEBI:33384"/>
    </ligand>
</feature>
<gene>
    <name evidence="1" type="primary">serS</name>
    <name type="ordered locus">RALTA_A0752</name>
</gene>
<reference key="1">
    <citation type="journal article" date="2008" name="Genome Res.">
        <title>Genome sequence of the beta-rhizobium Cupriavidus taiwanensis and comparative genomics of rhizobia.</title>
        <authorList>
            <person name="Amadou C."/>
            <person name="Pascal G."/>
            <person name="Mangenot S."/>
            <person name="Glew M."/>
            <person name="Bontemps C."/>
            <person name="Capela D."/>
            <person name="Carrere S."/>
            <person name="Cruveiller S."/>
            <person name="Dossat C."/>
            <person name="Lajus A."/>
            <person name="Marchetti M."/>
            <person name="Poinsot V."/>
            <person name="Rouy Z."/>
            <person name="Servin B."/>
            <person name="Saad M."/>
            <person name="Schenowitz C."/>
            <person name="Barbe V."/>
            <person name="Batut J."/>
            <person name="Medigue C."/>
            <person name="Masson-Boivin C."/>
        </authorList>
    </citation>
    <scope>NUCLEOTIDE SEQUENCE [LARGE SCALE GENOMIC DNA]</scope>
    <source>
        <strain>DSM 17343 / BCRC 17206 / CCUG 44338 / CIP 107171 / LMG 19424 / R1</strain>
    </source>
</reference>
<accession>B3R376</accession>
<dbReference type="EC" id="6.1.1.11" evidence="1"/>
<dbReference type="EMBL" id="CU633749">
    <property type="protein sequence ID" value="CAQ68724.1"/>
    <property type="molecule type" value="Genomic_DNA"/>
</dbReference>
<dbReference type="RefSeq" id="WP_012352061.1">
    <property type="nucleotide sequence ID" value="NC_010528.1"/>
</dbReference>
<dbReference type="SMR" id="B3R376"/>
<dbReference type="GeneID" id="29762490"/>
<dbReference type="KEGG" id="cti:RALTA_A0752"/>
<dbReference type="eggNOG" id="COG0172">
    <property type="taxonomic scope" value="Bacteria"/>
</dbReference>
<dbReference type="HOGENOM" id="CLU_023797_1_1_4"/>
<dbReference type="BioCyc" id="CTAI977880:RALTA_RS03625-MONOMER"/>
<dbReference type="UniPathway" id="UPA00906">
    <property type="reaction ID" value="UER00895"/>
</dbReference>
<dbReference type="Proteomes" id="UP000001692">
    <property type="component" value="Chromosome 1"/>
</dbReference>
<dbReference type="GO" id="GO:0005737">
    <property type="term" value="C:cytoplasm"/>
    <property type="evidence" value="ECO:0007669"/>
    <property type="project" value="UniProtKB-SubCell"/>
</dbReference>
<dbReference type="GO" id="GO:0005524">
    <property type="term" value="F:ATP binding"/>
    <property type="evidence" value="ECO:0007669"/>
    <property type="project" value="UniProtKB-UniRule"/>
</dbReference>
<dbReference type="GO" id="GO:0004828">
    <property type="term" value="F:serine-tRNA ligase activity"/>
    <property type="evidence" value="ECO:0007669"/>
    <property type="project" value="UniProtKB-UniRule"/>
</dbReference>
<dbReference type="GO" id="GO:0016260">
    <property type="term" value="P:selenocysteine biosynthetic process"/>
    <property type="evidence" value="ECO:0007669"/>
    <property type="project" value="UniProtKB-UniRule"/>
</dbReference>
<dbReference type="GO" id="GO:0006434">
    <property type="term" value="P:seryl-tRNA aminoacylation"/>
    <property type="evidence" value="ECO:0007669"/>
    <property type="project" value="UniProtKB-UniRule"/>
</dbReference>
<dbReference type="CDD" id="cd00770">
    <property type="entry name" value="SerRS_core"/>
    <property type="match status" value="1"/>
</dbReference>
<dbReference type="Gene3D" id="3.30.930.10">
    <property type="entry name" value="Bira Bifunctional Protein, Domain 2"/>
    <property type="match status" value="1"/>
</dbReference>
<dbReference type="Gene3D" id="1.10.287.40">
    <property type="entry name" value="Serine-tRNA synthetase, tRNA binding domain"/>
    <property type="match status" value="1"/>
</dbReference>
<dbReference type="HAMAP" id="MF_00176">
    <property type="entry name" value="Ser_tRNA_synth_type1"/>
    <property type="match status" value="1"/>
</dbReference>
<dbReference type="InterPro" id="IPR002314">
    <property type="entry name" value="aa-tRNA-synt_IIb"/>
</dbReference>
<dbReference type="InterPro" id="IPR006195">
    <property type="entry name" value="aa-tRNA-synth_II"/>
</dbReference>
<dbReference type="InterPro" id="IPR045864">
    <property type="entry name" value="aa-tRNA-synth_II/BPL/LPL"/>
</dbReference>
<dbReference type="InterPro" id="IPR002317">
    <property type="entry name" value="Ser-tRNA-ligase_type_1"/>
</dbReference>
<dbReference type="InterPro" id="IPR015866">
    <property type="entry name" value="Ser-tRNA-synth_1_N"/>
</dbReference>
<dbReference type="InterPro" id="IPR042103">
    <property type="entry name" value="SerRS_1_N_sf"/>
</dbReference>
<dbReference type="InterPro" id="IPR033729">
    <property type="entry name" value="SerRS_core"/>
</dbReference>
<dbReference type="InterPro" id="IPR010978">
    <property type="entry name" value="tRNA-bd_arm"/>
</dbReference>
<dbReference type="NCBIfam" id="TIGR00414">
    <property type="entry name" value="serS"/>
    <property type="match status" value="1"/>
</dbReference>
<dbReference type="PANTHER" id="PTHR43697:SF1">
    <property type="entry name" value="SERINE--TRNA LIGASE"/>
    <property type="match status" value="1"/>
</dbReference>
<dbReference type="PANTHER" id="PTHR43697">
    <property type="entry name" value="SERYL-TRNA SYNTHETASE"/>
    <property type="match status" value="1"/>
</dbReference>
<dbReference type="Pfam" id="PF02403">
    <property type="entry name" value="Seryl_tRNA_N"/>
    <property type="match status" value="1"/>
</dbReference>
<dbReference type="Pfam" id="PF00587">
    <property type="entry name" value="tRNA-synt_2b"/>
    <property type="match status" value="1"/>
</dbReference>
<dbReference type="PIRSF" id="PIRSF001529">
    <property type="entry name" value="Ser-tRNA-synth_IIa"/>
    <property type="match status" value="1"/>
</dbReference>
<dbReference type="PRINTS" id="PR00981">
    <property type="entry name" value="TRNASYNTHSER"/>
</dbReference>
<dbReference type="SUPFAM" id="SSF55681">
    <property type="entry name" value="Class II aaRS and biotin synthetases"/>
    <property type="match status" value="1"/>
</dbReference>
<dbReference type="SUPFAM" id="SSF46589">
    <property type="entry name" value="tRNA-binding arm"/>
    <property type="match status" value="1"/>
</dbReference>
<dbReference type="PROSITE" id="PS50862">
    <property type="entry name" value="AA_TRNA_LIGASE_II"/>
    <property type="match status" value="1"/>
</dbReference>
<protein>
    <recommendedName>
        <fullName evidence="1">Serine--tRNA ligase</fullName>
        <ecNumber evidence="1">6.1.1.11</ecNumber>
    </recommendedName>
    <alternativeName>
        <fullName evidence="1">Seryl-tRNA synthetase</fullName>
        <shortName evidence="1">SerRS</shortName>
    </alternativeName>
    <alternativeName>
        <fullName evidence="1">Seryl-tRNA(Ser/Sec) synthetase</fullName>
    </alternativeName>
</protein>
<sequence>MLDIQLFRKDIDAVAQRLATRGFQLDVAAFQALEAERKQLQTQTEELQARRNSLSKQIGMLKGKGEDASAVMAEVGGIGDTLKASAARLDEIQAHLGELMLSIPNLPHESVPVGNDETQNVEVRRVGEPRQFDFAVRDHVDVGEKLGLDFDTAVKVTGSRFSMLRGGMARLHRALVQLMLDTHTQEHGYTEMYVPYIVNAASMRGTGQLPKFEEDLFKVPRKVGSEEGERIENFYLIPTAEVPLTNIVRDAIVAGDKLPLRFVAHTPCFRSEAGSYGKDTRGMIRQHQFDKVELVQVVPADQSFDALEQLTGHAEAILKKLELPFRTIVLCTGDMGFGSTKTYDLEVWIPAQNTYREISSCSNMGDFQARRMQARMRTGQGKPELVHTLNGSGLAVGRTLVAILENYQNADGSVTVPAALQPYMGGTTRLEPEL</sequence>
<organism>
    <name type="scientific">Cupriavidus taiwanensis (strain DSM 17343 / BCRC 17206 / CCUG 44338 / CIP 107171 / LMG 19424 / R1)</name>
    <name type="common">Ralstonia taiwanensis (strain LMG 19424)</name>
    <dbReference type="NCBI Taxonomy" id="977880"/>
    <lineage>
        <taxon>Bacteria</taxon>
        <taxon>Pseudomonadati</taxon>
        <taxon>Pseudomonadota</taxon>
        <taxon>Betaproteobacteria</taxon>
        <taxon>Burkholderiales</taxon>
        <taxon>Burkholderiaceae</taxon>
        <taxon>Cupriavidus</taxon>
    </lineage>
</organism>
<keyword id="KW-0030">Aminoacyl-tRNA synthetase</keyword>
<keyword id="KW-0067">ATP-binding</keyword>
<keyword id="KW-0963">Cytoplasm</keyword>
<keyword id="KW-0436">Ligase</keyword>
<keyword id="KW-0547">Nucleotide-binding</keyword>
<keyword id="KW-0648">Protein biosynthesis</keyword>
<name>SYS_CUPTR</name>